<name>BASB_HALS3</name>
<sequence length="413" mass="41210">MHSTTRREWLGAIGATAATGLAGCAGVGGAGQPVTVGSLLPLSGPGSLGALAADHQRAIDTAVEHANRGGGINGRDVVHVSKDTEADPSVAADRYATLAADESPLAIVGPVLSGVTTALTEQAAADAQLLVSPSTTAPAIATAGRSDGQKFVARTCPNDSQQAAVMAKIVDDDMYAAADTATILYVDNAFGAALADVLADRLGADLLASVPYQGGTDTPGGPVDDALAPDPDAVAFIGSPGSSSGVIDELVGREYGGEIALSSALASASSPPSWNGAYTATVNSASTVGTKRLRRALSDATPLQPYTENAYDAAALALLAASYSGDPTPRAVAGALQSVSGGVGHSITVGDFGRATDLIDAGRELNYNGATGNVDLTAALEPVTGYLIQQLTDAGIETRELLKSGYFTDGGDA</sequence>
<gene>
    <name type="primary">basB</name>
    <name type="ordered locus">OE_3612R</name>
</gene>
<keyword id="KW-1003">Cell membrane</keyword>
<keyword id="KW-0145">Chemotaxis</keyword>
<keyword id="KW-0472">Membrane</keyword>
<keyword id="KW-0732">Signal</keyword>
<comment type="function">
    <text evidence="2">Mediates chemotaxis towards five attractant amino acids (leucine, isoleucine, valine, methionine and cysteine). May function as a receptor that binds the amino acids and transduces a signal to BasT. Has probably no additional role in transport.</text>
</comment>
<comment type="subcellular location">
    <subcellularLocation>
        <location evidence="3">Cell membrane</location>
        <topology evidence="3">Peripheral membrane protein</topology>
        <orientation evidence="3">Extracellular side</orientation>
    </subcellularLocation>
    <text>Probably anchored to the membrane by lipids.</text>
</comment>
<comment type="disruption phenotype">
    <text evidence="2">Mutants completely lose the chemotactic response towards leucine, isoleucine, valine, methionine and cysteine, but they still respond to arginine.</text>
</comment>
<protein>
    <recommendedName>
        <fullName>Chemotactic signal transduction system substrate-binding protein BasB</fullName>
    </recommendedName>
    <alternativeName>
        <fullName>Amino acid binding protein</fullName>
    </alternativeName>
</protein>
<accession>B0R6I5</accession>
<accession>F2Z6C3</accession>
<proteinExistence type="evidence at protein level"/>
<reference key="1">
    <citation type="journal article" date="2002" name="EMBO J.">
        <title>A novel mode of sensory transduction in archaea: binding protein-mediated chemotaxis towards osmoprotectants and amino acids.</title>
        <authorList>
            <person name="Kokoeva M.V."/>
            <person name="Storch K.F."/>
            <person name="Klein C."/>
            <person name="Oesterhelt D."/>
        </authorList>
    </citation>
    <scope>NUCLEOTIDE SEQUENCE [GENOMIC DNA]</scope>
    <scope>FUNCTION IN CHEMOTAXIS</scope>
    <scope>SUBCELLULAR LOCATION</scope>
    <scope>DISRUPTION PHENOTYPE</scope>
    <scope>GENE NAME</scope>
    <source>
        <strain>R1 / S9</strain>
    </source>
</reference>
<reference key="2">
    <citation type="journal article" date="2008" name="Genomics">
        <title>Evolution in the laboratory: the genome of Halobacterium salinarum strain R1 compared to that of strain NRC-1.</title>
        <authorList>
            <person name="Pfeiffer F."/>
            <person name="Schuster S.C."/>
            <person name="Broicher A."/>
            <person name="Falb M."/>
            <person name="Palm P."/>
            <person name="Rodewald K."/>
            <person name="Ruepp A."/>
            <person name="Soppa J."/>
            <person name="Tittor J."/>
            <person name="Oesterhelt D."/>
        </authorList>
    </citation>
    <scope>NUCLEOTIDE SEQUENCE [LARGE SCALE GENOMIC DNA]</scope>
    <source>
        <strain>ATCC 29341 / DSM 671 / R1</strain>
    </source>
</reference>
<dbReference type="EMBL" id="AJ438168">
    <property type="protein sequence ID" value="CAD27274.1"/>
    <property type="molecule type" value="Genomic_DNA"/>
</dbReference>
<dbReference type="EMBL" id="AM774415">
    <property type="protein sequence ID" value="CAP14354.1"/>
    <property type="molecule type" value="Genomic_DNA"/>
</dbReference>
<dbReference type="PIR" id="A84337">
    <property type="entry name" value="A84337"/>
</dbReference>
<dbReference type="RefSeq" id="WP_010903360.1">
    <property type="nucleotide sequence ID" value="NC_010364.1"/>
</dbReference>
<dbReference type="SMR" id="B0R6I5"/>
<dbReference type="EnsemblBacteria" id="CAP14354">
    <property type="protein sequence ID" value="CAP14354"/>
    <property type="gene ID" value="OE_3612R"/>
</dbReference>
<dbReference type="GeneID" id="68694481"/>
<dbReference type="KEGG" id="hsl:OE_3612R"/>
<dbReference type="HOGENOM" id="CLU_027128_5_0_2"/>
<dbReference type="Proteomes" id="UP000001321">
    <property type="component" value="Chromosome"/>
</dbReference>
<dbReference type="GO" id="GO:0005886">
    <property type="term" value="C:plasma membrane"/>
    <property type="evidence" value="ECO:0007669"/>
    <property type="project" value="UniProtKB-SubCell"/>
</dbReference>
<dbReference type="GO" id="GO:0006935">
    <property type="term" value="P:chemotaxis"/>
    <property type="evidence" value="ECO:0007669"/>
    <property type="project" value="UniProtKB-KW"/>
</dbReference>
<dbReference type="Gene3D" id="3.40.50.2300">
    <property type="match status" value="2"/>
</dbReference>
<dbReference type="InterPro" id="IPR051010">
    <property type="entry name" value="BCAA_transport"/>
</dbReference>
<dbReference type="InterPro" id="IPR028081">
    <property type="entry name" value="Leu-bd"/>
</dbReference>
<dbReference type="InterPro" id="IPR028082">
    <property type="entry name" value="Peripla_BP_I"/>
</dbReference>
<dbReference type="InterPro" id="IPR006311">
    <property type="entry name" value="TAT_signal"/>
</dbReference>
<dbReference type="PANTHER" id="PTHR30483">
    <property type="entry name" value="LEUCINE-SPECIFIC-BINDING PROTEIN"/>
    <property type="match status" value="1"/>
</dbReference>
<dbReference type="PANTHER" id="PTHR30483:SF6">
    <property type="entry name" value="PERIPLASMIC BINDING PROTEIN OF ABC TRANSPORTER FOR NATURAL AMINO ACIDS"/>
    <property type="match status" value="1"/>
</dbReference>
<dbReference type="Pfam" id="PF13458">
    <property type="entry name" value="Peripla_BP_6"/>
    <property type="match status" value="1"/>
</dbReference>
<dbReference type="SUPFAM" id="SSF53822">
    <property type="entry name" value="Periplasmic binding protein-like I"/>
    <property type="match status" value="1"/>
</dbReference>
<dbReference type="PROSITE" id="PS51318">
    <property type="entry name" value="TAT"/>
    <property type="match status" value="1"/>
</dbReference>
<organism>
    <name type="scientific">Halobacterium salinarum (strain ATCC 29341 / DSM 671 / R1)</name>
    <dbReference type="NCBI Taxonomy" id="478009"/>
    <lineage>
        <taxon>Archaea</taxon>
        <taxon>Methanobacteriati</taxon>
        <taxon>Methanobacteriota</taxon>
        <taxon>Stenosarchaea group</taxon>
        <taxon>Halobacteria</taxon>
        <taxon>Halobacteriales</taxon>
        <taxon>Halobacteriaceae</taxon>
        <taxon>Halobacterium</taxon>
        <taxon>Halobacterium salinarum NRC-34001</taxon>
    </lineage>
</organism>
<feature type="signal peptide" evidence="1">
    <location>
        <begin position="1"/>
        <end position="31"/>
    </location>
</feature>
<feature type="chain" id="PRO_0000428987" description="Chemotactic signal transduction system substrate-binding protein BasB">
    <location>
        <begin position="32"/>
        <end position="413"/>
    </location>
</feature>
<evidence type="ECO:0000255" key="1"/>
<evidence type="ECO:0000269" key="2">
    <source>
    </source>
</evidence>
<evidence type="ECO:0000305" key="3">
    <source>
    </source>
</evidence>